<comment type="alternative products">
    <event type="alternative splicing"/>
    <isoform>
        <id>Q8C088-1</id>
        <name>1</name>
        <sequence type="displayed"/>
    </isoform>
    <isoform>
        <id>Q8C088-2</id>
        <name>2</name>
        <sequence type="described" ref="VSP_034213"/>
    </isoform>
</comment>
<sequence length="590" mass="65021">MTSPLCFWCFCVWAAANWPPGSALQLQPGMPNVCREEQLTLVRLSRPCAQAFIDTIQFWKQGCSGPRWCVGYERRIRYYIIYRHVYATEHQTVFRCCPGWIQWDDEPGCFSSLSSLGTHFSGRECSYQDTRQCLCSQGFHGPHCQYEKNKHLESELTPGFLQKNVDECAVVNGGCQQRCINTLGTFHCECDTGYRRHADERTCIKTDPCAGANGCAHLCQTENGMARCACHAGYQLSEDKKACEDINECAGELAPCAHHCVNSKGSFTCTCHPGFELGADRKHCYRIELEIVNICEKNNGGCSHHCEPAIGGAHCSCNHGHQLDTDGKTCIDFDECESGEACCAQLCINYLGGYECSCEEGFQISSDGCGCDALDEQLEEEEEEIDILRFPGRLAQNPPQPFPYLDPSLTASYEDEDNDDADSEAEGEVQGLTALYRVVCLDGTFGLDCSLSCEDCMNGGRCQEGKSGCLCPAEWTGLICNESSVLRTGEDQQAPAGCLKGFFGKNCKRKCHCANNVHCHRVYGACMCDLGRYGRFCHLSCPRGAYGASCSLECQCVEENTLECSAKNGSCTCKSGYQGNRCQEELPLPA</sequence>
<proteinExistence type="evidence at transcript level"/>
<organism>
    <name type="scientific">Mus musculus</name>
    <name type="common">Mouse</name>
    <dbReference type="NCBI Taxonomy" id="10090"/>
    <lineage>
        <taxon>Eukaryota</taxon>
        <taxon>Metazoa</taxon>
        <taxon>Chordata</taxon>
        <taxon>Craniata</taxon>
        <taxon>Vertebrata</taxon>
        <taxon>Euteleostomi</taxon>
        <taxon>Mammalia</taxon>
        <taxon>Eutheria</taxon>
        <taxon>Euarchontoglires</taxon>
        <taxon>Glires</taxon>
        <taxon>Rodentia</taxon>
        <taxon>Myomorpha</taxon>
        <taxon>Muroidea</taxon>
        <taxon>Muridae</taxon>
        <taxon>Murinae</taxon>
        <taxon>Mus</taxon>
        <taxon>Mus</taxon>
    </lineage>
</organism>
<protein>
    <recommendedName>
        <fullName>EGF-like and EMI domain-containing protein 1</fullName>
    </recommendedName>
</protein>
<name>EGFEM_MOUSE</name>
<accession>Q8C088</accession>
<accession>B7ZCE8</accession>
<accession>Q149G1</accession>
<reference key="1">
    <citation type="journal article" date="2005" name="Science">
        <title>The transcriptional landscape of the mammalian genome.</title>
        <authorList>
            <person name="Carninci P."/>
            <person name="Kasukawa T."/>
            <person name="Katayama S."/>
            <person name="Gough J."/>
            <person name="Frith M.C."/>
            <person name="Maeda N."/>
            <person name="Oyama R."/>
            <person name="Ravasi T."/>
            <person name="Lenhard B."/>
            <person name="Wells C."/>
            <person name="Kodzius R."/>
            <person name="Shimokawa K."/>
            <person name="Bajic V.B."/>
            <person name="Brenner S.E."/>
            <person name="Batalov S."/>
            <person name="Forrest A.R."/>
            <person name="Zavolan M."/>
            <person name="Davis M.J."/>
            <person name="Wilming L.G."/>
            <person name="Aidinis V."/>
            <person name="Allen J.E."/>
            <person name="Ambesi-Impiombato A."/>
            <person name="Apweiler R."/>
            <person name="Aturaliya R.N."/>
            <person name="Bailey T.L."/>
            <person name="Bansal M."/>
            <person name="Baxter L."/>
            <person name="Beisel K.W."/>
            <person name="Bersano T."/>
            <person name="Bono H."/>
            <person name="Chalk A.M."/>
            <person name="Chiu K.P."/>
            <person name="Choudhary V."/>
            <person name="Christoffels A."/>
            <person name="Clutterbuck D.R."/>
            <person name="Crowe M.L."/>
            <person name="Dalla E."/>
            <person name="Dalrymple B.P."/>
            <person name="de Bono B."/>
            <person name="Della Gatta G."/>
            <person name="di Bernardo D."/>
            <person name="Down T."/>
            <person name="Engstrom P."/>
            <person name="Fagiolini M."/>
            <person name="Faulkner G."/>
            <person name="Fletcher C.F."/>
            <person name="Fukushima T."/>
            <person name="Furuno M."/>
            <person name="Futaki S."/>
            <person name="Gariboldi M."/>
            <person name="Georgii-Hemming P."/>
            <person name="Gingeras T.R."/>
            <person name="Gojobori T."/>
            <person name="Green R.E."/>
            <person name="Gustincich S."/>
            <person name="Harbers M."/>
            <person name="Hayashi Y."/>
            <person name="Hensch T.K."/>
            <person name="Hirokawa N."/>
            <person name="Hill D."/>
            <person name="Huminiecki L."/>
            <person name="Iacono M."/>
            <person name="Ikeo K."/>
            <person name="Iwama A."/>
            <person name="Ishikawa T."/>
            <person name="Jakt M."/>
            <person name="Kanapin A."/>
            <person name="Katoh M."/>
            <person name="Kawasawa Y."/>
            <person name="Kelso J."/>
            <person name="Kitamura H."/>
            <person name="Kitano H."/>
            <person name="Kollias G."/>
            <person name="Krishnan S.P."/>
            <person name="Kruger A."/>
            <person name="Kummerfeld S.K."/>
            <person name="Kurochkin I.V."/>
            <person name="Lareau L.F."/>
            <person name="Lazarevic D."/>
            <person name="Lipovich L."/>
            <person name="Liu J."/>
            <person name="Liuni S."/>
            <person name="McWilliam S."/>
            <person name="Madan Babu M."/>
            <person name="Madera M."/>
            <person name="Marchionni L."/>
            <person name="Matsuda H."/>
            <person name="Matsuzawa S."/>
            <person name="Miki H."/>
            <person name="Mignone F."/>
            <person name="Miyake S."/>
            <person name="Morris K."/>
            <person name="Mottagui-Tabar S."/>
            <person name="Mulder N."/>
            <person name="Nakano N."/>
            <person name="Nakauchi H."/>
            <person name="Ng P."/>
            <person name="Nilsson R."/>
            <person name="Nishiguchi S."/>
            <person name="Nishikawa S."/>
            <person name="Nori F."/>
            <person name="Ohara O."/>
            <person name="Okazaki Y."/>
            <person name="Orlando V."/>
            <person name="Pang K.C."/>
            <person name="Pavan W.J."/>
            <person name="Pavesi G."/>
            <person name="Pesole G."/>
            <person name="Petrovsky N."/>
            <person name="Piazza S."/>
            <person name="Reed J."/>
            <person name="Reid J.F."/>
            <person name="Ring B.Z."/>
            <person name="Ringwald M."/>
            <person name="Rost B."/>
            <person name="Ruan Y."/>
            <person name="Salzberg S.L."/>
            <person name="Sandelin A."/>
            <person name="Schneider C."/>
            <person name="Schoenbach C."/>
            <person name="Sekiguchi K."/>
            <person name="Semple C.A."/>
            <person name="Seno S."/>
            <person name="Sessa L."/>
            <person name="Sheng Y."/>
            <person name="Shibata Y."/>
            <person name="Shimada H."/>
            <person name="Shimada K."/>
            <person name="Silva D."/>
            <person name="Sinclair B."/>
            <person name="Sperling S."/>
            <person name="Stupka E."/>
            <person name="Sugiura K."/>
            <person name="Sultana R."/>
            <person name="Takenaka Y."/>
            <person name="Taki K."/>
            <person name="Tammoja K."/>
            <person name="Tan S.L."/>
            <person name="Tang S."/>
            <person name="Taylor M.S."/>
            <person name="Tegner J."/>
            <person name="Teichmann S.A."/>
            <person name="Ueda H.R."/>
            <person name="van Nimwegen E."/>
            <person name="Verardo R."/>
            <person name="Wei C.L."/>
            <person name="Yagi K."/>
            <person name="Yamanishi H."/>
            <person name="Zabarovsky E."/>
            <person name="Zhu S."/>
            <person name="Zimmer A."/>
            <person name="Hide W."/>
            <person name="Bult C."/>
            <person name="Grimmond S.M."/>
            <person name="Teasdale R.D."/>
            <person name="Liu E.T."/>
            <person name="Brusic V."/>
            <person name="Quackenbush J."/>
            <person name="Wahlestedt C."/>
            <person name="Mattick J.S."/>
            <person name="Hume D.A."/>
            <person name="Kai C."/>
            <person name="Sasaki D."/>
            <person name="Tomaru Y."/>
            <person name="Fukuda S."/>
            <person name="Kanamori-Katayama M."/>
            <person name="Suzuki M."/>
            <person name="Aoki J."/>
            <person name="Arakawa T."/>
            <person name="Iida J."/>
            <person name="Imamura K."/>
            <person name="Itoh M."/>
            <person name="Kato T."/>
            <person name="Kawaji H."/>
            <person name="Kawagashira N."/>
            <person name="Kawashima T."/>
            <person name="Kojima M."/>
            <person name="Kondo S."/>
            <person name="Konno H."/>
            <person name="Nakano K."/>
            <person name="Ninomiya N."/>
            <person name="Nishio T."/>
            <person name="Okada M."/>
            <person name="Plessy C."/>
            <person name="Shibata K."/>
            <person name="Shiraki T."/>
            <person name="Suzuki S."/>
            <person name="Tagami M."/>
            <person name="Waki K."/>
            <person name="Watahiki A."/>
            <person name="Okamura-Oho Y."/>
            <person name="Suzuki H."/>
            <person name="Kawai J."/>
            <person name="Hayashizaki Y."/>
        </authorList>
    </citation>
    <scope>NUCLEOTIDE SEQUENCE [LARGE SCALE MRNA] (ISOFORM 1)</scope>
    <source>
        <strain>C57BL/6J</strain>
        <tissue>Medulla oblongata</tissue>
    </source>
</reference>
<reference key="2">
    <citation type="journal article" date="2009" name="PLoS Biol.">
        <title>Lineage-specific biology revealed by a finished genome assembly of the mouse.</title>
        <authorList>
            <person name="Church D.M."/>
            <person name="Goodstadt L."/>
            <person name="Hillier L.W."/>
            <person name="Zody M.C."/>
            <person name="Goldstein S."/>
            <person name="She X."/>
            <person name="Bult C.J."/>
            <person name="Agarwala R."/>
            <person name="Cherry J.L."/>
            <person name="DiCuccio M."/>
            <person name="Hlavina W."/>
            <person name="Kapustin Y."/>
            <person name="Meric P."/>
            <person name="Maglott D."/>
            <person name="Birtle Z."/>
            <person name="Marques A.C."/>
            <person name="Graves T."/>
            <person name="Zhou S."/>
            <person name="Teague B."/>
            <person name="Potamousis K."/>
            <person name="Churas C."/>
            <person name="Place M."/>
            <person name="Herschleb J."/>
            <person name="Runnheim R."/>
            <person name="Forrest D."/>
            <person name="Amos-Landgraf J."/>
            <person name="Schwartz D.C."/>
            <person name="Cheng Z."/>
            <person name="Lindblad-Toh K."/>
            <person name="Eichler E.E."/>
            <person name="Ponting C.P."/>
        </authorList>
    </citation>
    <scope>NUCLEOTIDE SEQUENCE [LARGE SCALE GENOMIC DNA]</scope>
    <source>
        <strain>C57BL/6J</strain>
    </source>
</reference>
<reference key="3">
    <citation type="journal article" date="2004" name="Genome Res.">
        <title>The status, quality, and expansion of the NIH full-length cDNA project: the Mammalian Gene Collection (MGC).</title>
        <authorList>
            <consortium name="The MGC Project Team"/>
        </authorList>
    </citation>
    <scope>NUCLEOTIDE SEQUENCE [LARGE SCALE MRNA] (ISOFORM 2)</scope>
</reference>
<dbReference type="EMBL" id="AK032017">
    <property type="protein sequence ID" value="BAC27650.1"/>
    <property type="molecule type" value="mRNA"/>
</dbReference>
<dbReference type="EMBL" id="AC110222">
    <property type="status" value="NOT_ANNOTATED_CDS"/>
    <property type="molecule type" value="Genomic_DNA"/>
</dbReference>
<dbReference type="EMBL" id="AC119240">
    <property type="status" value="NOT_ANNOTATED_CDS"/>
    <property type="molecule type" value="Genomic_DNA"/>
</dbReference>
<dbReference type="EMBL" id="AL691427">
    <property type="status" value="NOT_ANNOTATED_CDS"/>
    <property type="molecule type" value="Genomic_DNA"/>
</dbReference>
<dbReference type="EMBL" id="BC117810">
    <property type="protein sequence ID" value="AAI17811.1"/>
    <property type="molecule type" value="mRNA"/>
</dbReference>
<dbReference type="CCDS" id="CCDS50881.1">
    <molecule id="Q8C088-1"/>
</dbReference>
<dbReference type="CCDS" id="CCDS50882.1">
    <molecule id="Q8C088-2"/>
</dbReference>
<dbReference type="RefSeq" id="NP_001161220.1">
    <molecule id="Q8C088-2"/>
    <property type="nucleotide sequence ID" value="NM_001167748.3"/>
</dbReference>
<dbReference type="BioGRID" id="217705">
    <property type="interactions" value="2"/>
</dbReference>
<dbReference type="STRING" id="10090.ENSMUSP00000112943"/>
<dbReference type="PaxDb" id="10090-ENSMUSP00000112943"/>
<dbReference type="Ensembl" id="ENSMUST00000118531.8">
    <molecule id="Q8C088-2"/>
    <property type="protein sequence ID" value="ENSMUSP00000112907.2"/>
    <property type="gene ID" value="ENSMUSG00000063600.15"/>
</dbReference>
<dbReference type="GeneID" id="75740"/>
<dbReference type="KEGG" id="mmu:75740"/>
<dbReference type="UCSC" id="uc008ouk.2">
    <molecule id="Q8C088-2"/>
    <property type="organism name" value="mouse"/>
</dbReference>
<dbReference type="AGR" id="MGI:1922990"/>
<dbReference type="CTD" id="75740"/>
<dbReference type="MGI" id="MGI:1922990">
    <property type="gene designation" value="Egfem1"/>
</dbReference>
<dbReference type="VEuPathDB" id="HostDB:ENSMUSG00000063600"/>
<dbReference type="eggNOG" id="KOG1218">
    <property type="taxonomic scope" value="Eukaryota"/>
</dbReference>
<dbReference type="GeneTree" id="ENSGT00940000164694"/>
<dbReference type="InParanoid" id="Q8C088"/>
<dbReference type="OrthoDB" id="409374at2759"/>
<dbReference type="BioGRID-ORCS" id="75740">
    <property type="hits" value="1 hit in 77 CRISPR screens"/>
</dbReference>
<dbReference type="ChiTaRS" id="Egfem1">
    <property type="organism name" value="mouse"/>
</dbReference>
<dbReference type="PRO" id="PR:Q8C088"/>
<dbReference type="Proteomes" id="UP000000589">
    <property type="component" value="Chromosome 3"/>
</dbReference>
<dbReference type="RNAct" id="Q8C088">
    <property type="molecule type" value="protein"/>
</dbReference>
<dbReference type="Bgee" id="ENSMUSG00000063600">
    <property type="expression patterns" value="Expressed in dentate gyrus of hippocampal formation granule cell and 60 other cell types or tissues"/>
</dbReference>
<dbReference type="ExpressionAtlas" id="Q8C088">
    <property type="expression patterns" value="baseline and differential"/>
</dbReference>
<dbReference type="GO" id="GO:0005509">
    <property type="term" value="F:calcium ion binding"/>
    <property type="evidence" value="ECO:0007669"/>
    <property type="project" value="InterPro"/>
</dbReference>
<dbReference type="FunFam" id="2.10.25.10:FF:000010">
    <property type="entry name" value="Pro-epidermal growth factor"/>
    <property type="match status" value="1"/>
</dbReference>
<dbReference type="FunFam" id="2.10.25.10:FF:000037">
    <property type="entry name" value="Signal peptide, CUB domain and EGF-like domain-containing 2"/>
    <property type="match status" value="2"/>
</dbReference>
<dbReference type="FunFam" id="2.170.300.10:FF:000041">
    <property type="entry name" value="Tyrosine protein kinase receptor tie-1, putative"/>
    <property type="match status" value="1"/>
</dbReference>
<dbReference type="FunFam" id="2.10.25.10:FF:000240">
    <property type="entry name" value="Vitamin K-dependent protein S"/>
    <property type="match status" value="1"/>
</dbReference>
<dbReference type="Gene3D" id="2.10.25.10">
    <property type="entry name" value="Laminin"/>
    <property type="match status" value="5"/>
</dbReference>
<dbReference type="Gene3D" id="2.170.300.10">
    <property type="entry name" value="Tie2 ligand-binding domain superfamily"/>
    <property type="match status" value="2"/>
</dbReference>
<dbReference type="InterPro" id="IPR001881">
    <property type="entry name" value="EGF-like_Ca-bd_dom"/>
</dbReference>
<dbReference type="InterPro" id="IPR000742">
    <property type="entry name" value="EGF-like_dom"/>
</dbReference>
<dbReference type="InterPro" id="IPR000152">
    <property type="entry name" value="EGF-type_Asp/Asn_hydroxyl_site"/>
</dbReference>
<dbReference type="InterPro" id="IPR018097">
    <property type="entry name" value="EGF_Ca-bd_CS"/>
</dbReference>
<dbReference type="InterPro" id="IPR011489">
    <property type="entry name" value="EMI_domain"/>
</dbReference>
<dbReference type="InterPro" id="IPR009030">
    <property type="entry name" value="Growth_fac_rcpt_cys_sf"/>
</dbReference>
<dbReference type="InterPro" id="IPR052108">
    <property type="entry name" value="MEGF/SIB"/>
</dbReference>
<dbReference type="InterPro" id="IPR049883">
    <property type="entry name" value="NOTCH1_EGF-like"/>
</dbReference>
<dbReference type="PANTHER" id="PTHR24035">
    <property type="entry name" value="MULTIPLE EPIDERMAL GROWTH FACTOR-LIKE DOMAINS PROTEIN"/>
    <property type="match status" value="1"/>
</dbReference>
<dbReference type="PANTHER" id="PTHR24035:SF138">
    <property type="entry name" value="MULTIPLE EPIDERMAL GROWTH FACTOR-LIKE DOMAINS PROTEIN 6"/>
    <property type="match status" value="1"/>
</dbReference>
<dbReference type="Pfam" id="PF07645">
    <property type="entry name" value="EGF_CA"/>
    <property type="match status" value="2"/>
</dbReference>
<dbReference type="Pfam" id="PF07546">
    <property type="entry name" value="EMI"/>
    <property type="match status" value="1"/>
</dbReference>
<dbReference type="Pfam" id="PF14670">
    <property type="entry name" value="FXa_inhibition"/>
    <property type="match status" value="2"/>
</dbReference>
<dbReference type="PRINTS" id="PR00011">
    <property type="entry name" value="EGFLAMININ"/>
</dbReference>
<dbReference type="SMART" id="SM00181">
    <property type="entry name" value="EGF"/>
    <property type="match status" value="8"/>
</dbReference>
<dbReference type="SMART" id="SM00179">
    <property type="entry name" value="EGF_CA"/>
    <property type="match status" value="5"/>
</dbReference>
<dbReference type="SUPFAM" id="SSF57196">
    <property type="entry name" value="EGF/Laminin"/>
    <property type="match status" value="1"/>
</dbReference>
<dbReference type="SUPFAM" id="SSF57184">
    <property type="entry name" value="Growth factor receptor domain"/>
    <property type="match status" value="1"/>
</dbReference>
<dbReference type="PROSITE" id="PS00010">
    <property type="entry name" value="ASX_HYDROXYL"/>
    <property type="match status" value="3"/>
</dbReference>
<dbReference type="PROSITE" id="PS00022">
    <property type="entry name" value="EGF_1"/>
    <property type="match status" value="4"/>
</dbReference>
<dbReference type="PROSITE" id="PS01186">
    <property type="entry name" value="EGF_2"/>
    <property type="match status" value="6"/>
</dbReference>
<dbReference type="PROSITE" id="PS50026">
    <property type="entry name" value="EGF_3"/>
    <property type="match status" value="4"/>
</dbReference>
<dbReference type="PROSITE" id="PS01187">
    <property type="entry name" value="EGF_CA"/>
    <property type="match status" value="3"/>
</dbReference>
<dbReference type="PROSITE" id="PS51041">
    <property type="entry name" value="EMI"/>
    <property type="match status" value="1"/>
</dbReference>
<evidence type="ECO:0000250" key="1"/>
<evidence type="ECO:0000255" key="2"/>
<evidence type="ECO:0000255" key="3">
    <source>
        <dbReference type="PROSITE-ProRule" id="PRU00076"/>
    </source>
</evidence>
<evidence type="ECO:0000255" key="4">
    <source>
        <dbReference type="PROSITE-ProRule" id="PRU00384"/>
    </source>
</evidence>
<evidence type="ECO:0000256" key="5">
    <source>
        <dbReference type="SAM" id="MobiDB-lite"/>
    </source>
</evidence>
<evidence type="ECO:0000303" key="6">
    <source>
    </source>
</evidence>
<evidence type="ECO:0000305" key="7"/>
<gene>
    <name type="primary">Egfem1</name>
</gene>
<keyword id="KW-0025">Alternative splicing</keyword>
<keyword id="KW-0106">Calcium</keyword>
<keyword id="KW-1015">Disulfide bond</keyword>
<keyword id="KW-0245">EGF-like domain</keyword>
<keyword id="KW-1185">Reference proteome</keyword>
<keyword id="KW-0677">Repeat</keyword>
<keyword id="KW-0732">Signal</keyword>
<feature type="signal peptide" evidence="2">
    <location>
        <begin position="1"/>
        <end position="23"/>
    </location>
</feature>
<feature type="chain" id="PRO_0000340647" description="EGF-like and EMI domain-containing protein 1">
    <location>
        <begin position="24"/>
        <end position="590"/>
    </location>
</feature>
<feature type="domain" description="EMI" evidence="4">
    <location>
        <begin position="44"/>
        <end position="104"/>
    </location>
</feature>
<feature type="domain" description="EGF-like 1" evidence="3">
    <location>
        <begin position="105"/>
        <end position="145"/>
    </location>
</feature>
<feature type="domain" description="EGF-like 2; calcium-binding" evidence="3">
    <location>
        <begin position="164"/>
        <end position="204"/>
    </location>
</feature>
<feature type="domain" description="EGF-like 3" evidence="3">
    <location>
        <begin position="205"/>
        <end position="244"/>
    </location>
</feature>
<feature type="domain" description="EGF-like 4; calcium-binding" evidence="3">
    <location>
        <begin position="245"/>
        <end position="285"/>
    </location>
</feature>
<feature type="domain" description="EGF-like 5" evidence="3">
    <location>
        <begin position="445"/>
        <end position="481"/>
    </location>
</feature>
<feature type="region of interest" description="Disordered" evidence="5">
    <location>
        <begin position="393"/>
        <end position="424"/>
    </location>
</feature>
<feature type="compositionally biased region" description="Acidic residues" evidence="5">
    <location>
        <begin position="413"/>
        <end position="424"/>
    </location>
</feature>
<feature type="disulfide bond" evidence="1">
    <location>
        <begin position="109"/>
        <end position="125"/>
    </location>
</feature>
<feature type="disulfide bond" evidence="1">
    <location>
        <begin position="135"/>
        <end position="144"/>
    </location>
</feature>
<feature type="disulfide bond" evidence="1">
    <location>
        <begin position="168"/>
        <end position="179"/>
    </location>
</feature>
<feature type="disulfide bond" evidence="1">
    <location>
        <begin position="175"/>
        <end position="188"/>
    </location>
</feature>
<feature type="disulfide bond" evidence="1">
    <location>
        <begin position="190"/>
        <end position="203"/>
    </location>
</feature>
<feature type="disulfide bond" evidence="1">
    <location>
        <begin position="209"/>
        <end position="219"/>
    </location>
</feature>
<feature type="disulfide bond" evidence="1">
    <location>
        <begin position="215"/>
        <end position="228"/>
    </location>
</feature>
<feature type="disulfide bond" evidence="1">
    <location>
        <begin position="230"/>
        <end position="243"/>
    </location>
</feature>
<feature type="disulfide bond" evidence="1">
    <location>
        <begin position="249"/>
        <end position="260"/>
    </location>
</feature>
<feature type="disulfide bond" evidence="1">
    <location>
        <begin position="256"/>
        <end position="269"/>
    </location>
</feature>
<feature type="disulfide bond" evidence="1">
    <location>
        <begin position="271"/>
        <end position="284"/>
    </location>
</feature>
<feature type="disulfide bond" evidence="1">
    <location>
        <begin position="449"/>
        <end position="462"/>
    </location>
</feature>
<feature type="disulfide bond" evidence="1">
    <location>
        <begin position="456"/>
        <end position="469"/>
    </location>
</feature>
<feature type="disulfide bond" evidence="1">
    <location>
        <begin position="471"/>
        <end position="480"/>
    </location>
</feature>
<feature type="splice variant" id="VSP_034213" description="In isoform 2." evidence="6">
    <original>EKNKHLESELTPGFLQKNVDECAVVNGGCQQRCINTLGTFHCECDTGYRRHADERTCIKTDPCAGANGCAHLCQTENGMARCACHAGYQLSEDKKACEDINECAGELAPCAHHCVNSKGSFTCTCHPGFELGADRKHCY</original>
    <variation>DINECAVDNGGCRDRCCNTIGSYYCRCQAGQKLEEDGRGCEDVDECAVVNGGCQQRCINTLGTFHCECDTGYRRHADERTCI</variation>
    <location>
        <begin position="147"/>
        <end position="285"/>
    </location>
</feature>
<feature type="sequence conflict" description="In Ref. 3; AAI17811." evidence="7" ref="3">
    <original>V</original>
    <variation>A</variation>
    <location>
        <position position="517"/>
    </location>
</feature>